<accession>B4SKX5</accession>
<proteinExistence type="inferred from homology"/>
<feature type="chain" id="PRO_1000142455" description="Large ribosomal subunit protein uL5">
    <location>
        <begin position="1"/>
        <end position="180"/>
    </location>
</feature>
<reference key="1">
    <citation type="submission" date="2008-06" db="EMBL/GenBank/DDBJ databases">
        <title>Complete sequence of Stenotrophomonas maltophilia R551-3.</title>
        <authorList>
            <consortium name="US DOE Joint Genome Institute"/>
            <person name="Lucas S."/>
            <person name="Copeland A."/>
            <person name="Lapidus A."/>
            <person name="Glavina del Rio T."/>
            <person name="Dalin E."/>
            <person name="Tice H."/>
            <person name="Pitluck S."/>
            <person name="Chain P."/>
            <person name="Malfatti S."/>
            <person name="Shin M."/>
            <person name="Vergez L."/>
            <person name="Lang D."/>
            <person name="Schmutz J."/>
            <person name="Larimer F."/>
            <person name="Land M."/>
            <person name="Hauser L."/>
            <person name="Kyrpides N."/>
            <person name="Mikhailova N."/>
            <person name="Taghavi S."/>
            <person name="Monchy S."/>
            <person name="Newman L."/>
            <person name="Vangronsveld J."/>
            <person name="van der Lelie D."/>
            <person name="Richardson P."/>
        </authorList>
    </citation>
    <scope>NUCLEOTIDE SEQUENCE [LARGE SCALE GENOMIC DNA]</scope>
    <source>
        <strain>R551-3</strain>
    </source>
</reference>
<gene>
    <name evidence="1" type="primary">rplE</name>
    <name type="ordered locus">Smal_0768</name>
</gene>
<keyword id="KW-0687">Ribonucleoprotein</keyword>
<keyword id="KW-0689">Ribosomal protein</keyword>
<keyword id="KW-0694">RNA-binding</keyword>
<keyword id="KW-0699">rRNA-binding</keyword>
<keyword id="KW-0820">tRNA-binding</keyword>
<sequence>MTSRLEKFYKEEVVPALMKQFGYTNPMEVPKLVKVTLNMGVGEAATNKKILENAVGDMTKISGQKPVVTKSRISVASFKIRDGWPIGCKTTLRRHKMYEFLDRLINISLPRVRDFRGVSGRSFDGRGNFNMGVKEQIIFPEIDFDAVDAIRGMDIAITTTAKTDAEAKALLAAFKFPFRN</sequence>
<comment type="function">
    <text evidence="1">This is one of the proteins that bind and probably mediate the attachment of the 5S RNA into the large ribosomal subunit, where it forms part of the central protuberance. In the 70S ribosome it contacts protein S13 of the 30S subunit (bridge B1b), connecting the 2 subunits; this bridge is implicated in subunit movement. Contacts the P site tRNA; the 5S rRNA and some of its associated proteins might help stabilize positioning of ribosome-bound tRNAs.</text>
</comment>
<comment type="subunit">
    <text evidence="1">Part of the 50S ribosomal subunit; part of the 5S rRNA/L5/L18/L25 subcomplex. Contacts the 5S rRNA and the P site tRNA. Forms a bridge to the 30S subunit in the 70S ribosome.</text>
</comment>
<comment type="similarity">
    <text evidence="1">Belongs to the universal ribosomal protein uL5 family.</text>
</comment>
<dbReference type="EMBL" id="CP001111">
    <property type="protein sequence ID" value="ACF50473.1"/>
    <property type="molecule type" value="Genomic_DNA"/>
</dbReference>
<dbReference type="RefSeq" id="WP_004145361.1">
    <property type="nucleotide sequence ID" value="NC_011071.1"/>
</dbReference>
<dbReference type="SMR" id="B4SKX5"/>
<dbReference type="STRING" id="391008.Smal_0768"/>
<dbReference type="KEGG" id="smt:Smal_0768"/>
<dbReference type="eggNOG" id="COG0094">
    <property type="taxonomic scope" value="Bacteria"/>
</dbReference>
<dbReference type="HOGENOM" id="CLU_061015_2_1_6"/>
<dbReference type="OrthoDB" id="9806626at2"/>
<dbReference type="Proteomes" id="UP000001867">
    <property type="component" value="Chromosome"/>
</dbReference>
<dbReference type="GO" id="GO:1990904">
    <property type="term" value="C:ribonucleoprotein complex"/>
    <property type="evidence" value="ECO:0007669"/>
    <property type="project" value="UniProtKB-KW"/>
</dbReference>
<dbReference type="GO" id="GO:0005840">
    <property type="term" value="C:ribosome"/>
    <property type="evidence" value="ECO:0007669"/>
    <property type="project" value="UniProtKB-KW"/>
</dbReference>
<dbReference type="GO" id="GO:0019843">
    <property type="term" value="F:rRNA binding"/>
    <property type="evidence" value="ECO:0007669"/>
    <property type="project" value="UniProtKB-UniRule"/>
</dbReference>
<dbReference type="GO" id="GO:0003735">
    <property type="term" value="F:structural constituent of ribosome"/>
    <property type="evidence" value="ECO:0007669"/>
    <property type="project" value="InterPro"/>
</dbReference>
<dbReference type="GO" id="GO:0000049">
    <property type="term" value="F:tRNA binding"/>
    <property type="evidence" value="ECO:0007669"/>
    <property type="project" value="UniProtKB-UniRule"/>
</dbReference>
<dbReference type="GO" id="GO:0006412">
    <property type="term" value="P:translation"/>
    <property type="evidence" value="ECO:0007669"/>
    <property type="project" value="UniProtKB-UniRule"/>
</dbReference>
<dbReference type="FunFam" id="3.30.1440.10:FF:000001">
    <property type="entry name" value="50S ribosomal protein L5"/>
    <property type="match status" value="1"/>
</dbReference>
<dbReference type="Gene3D" id="3.30.1440.10">
    <property type="match status" value="1"/>
</dbReference>
<dbReference type="HAMAP" id="MF_01333_B">
    <property type="entry name" value="Ribosomal_uL5_B"/>
    <property type="match status" value="1"/>
</dbReference>
<dbReference type="InterPro" id="IPR002132">
    <property type="entry name" value="Ribosomal_uL5"/>
</dbReference>
<dbReference type="InterPro" id="IPR020930">
    <property type="entry name" value="Ribosomal_uL5_bac-type"/>
</dbReference>
<dbReference type="InterPro" id="IPR031309">
    <property type="entry name" value="Ribosomal_uL5_C"/>
</dbReference>
<dbReference type="InterPro" id="IPR020929">
    <property type="entry name" value="Ribosomal_uL5_CS"/>
</dbReference>
<dbReference type="InterPro" id="IPR022803">
    <property type="entry name" value="Ribosomal_uL5_dom_sf"/>
</dbReference>
<dbReference type="InterPro" id="IPR031310">
    <property type="entry name" value="Ribosomal_uL5_N"/>
</dbReference>
<dbReference type="NCBIfam" id="NF000585">
    <property type="entry name" value="PRK00010.1"/>
    <property type="match status" value="1"/>
</dbReference>
<dbReference type="PANTHER" id="PTHR11994">
    <property type="entry name" value="60S RIBOSOMAL PROTEIN L11-RELATED"/>
    <property type="match status" value="1"/>
</dbReference>
<dbReference type="Pfam" id="PF00281">
    <property type="entry name" value="Ribosomal_L5"/>
    <property type="match status" value="1"/>
</dbReference>
<dbReference type="Pfam" id="PF00673">
    <property type="entry name" value="Ribosomal_L5_C"/>
    <property type="match status" value="1"/>
</dbReference>
<dbReference type="PIRSF" id="PIRSF002161">
    <property type="entry name" value="Ribosomal_L5"/>
    <property type="match status" value="1"/>
</dbReference>
<dbReference type="SUPFAM" id="SSF55282">
    <property type="entry name" value="RL5-like"/>
    <property type="match status" value="1"/>
</dbReference>
<dbReference type="PROSITE" id="PS00358">
    <property type="entry name" value="RIBOSOMAL_L5"/>
    <property type="match status" value="1"/>
</dbReference>
<organism>
    <name type="scientific">Stenotrophomonas maltophilia (strain R551-3)</name>
    <dbReference type="NCBI Taxonomy" id="391008"/>
    <lineage>
        <taxon>Bacteria</taxon>
        <taxon>Pseudomonadati</taxon>
        <taxon>Pseudomonadota</taxon>
        <taxon>Gammaproteobacteria</taxon>
        <taxon>Lysobacterales</taxon>
        <taxon>Lysobacteraceae</taxon>
        <taxon>Stenotrophomonas</taxon>
        <taxon>Stenotrophomonas maltophilia group</taxon>
    </lineage>
</organism>
<evidence type="ECO:0000255" key="1">
    <source>
        <dbReference type="HAMAP-Rule" id="MF_01333"/>
    </source>
</evidence>
<evidence type="ECO:0000305" key="2"/>
<protein>
    <recommendedName>
        <fullName evidence="1">Large ribosomal subunit protein uL5</fullName>
    </recommendedName>
    <alternativeName>
        <fullName evidence="2">50S ribosomal protein L5</fullName>
    </alternativeName>
</protein>
<name>RL5_STRM5</name>